<accession>B2V6C3</accession>
<name>MNMG_SULSY</name>
<feature type="chain" id="PRO_1000203168" description="tRNA uridine 5-carboxymethylaminomethyl modification enzyme MnmG">
    <location>
        <begin position="1"/>
        <end position="620"/>
    </location>
</feature>
<feature type="binding site" evidence="1">
    <location>
        <begin position="13"/>
        <end position="18"/>
    </location>
    <ligand>
        <name>FAD</name>
        <dbReference type="ChEBI" id="CHEBI:57692"/>
    </ligand>
</feature>
<feature type="binding site" evidence="1">
    <location>
        <position position="125"/>
    </location>
    <ligand>
        <name>FAD</name>
        <dbReference type="ChEBI" id="CHEBI:57692"/>
    </ligand>
</feature>
<feature type="binding site" evidence="1">
    <location>
        <position position="182"/>
    </location>
    <ligand>
        <name>FAD</name>
        <dbReference type="ChEBI" id="CHEBI:57692"/>
    </ligand>
</feature>
<feature type="binding site" evidence="1">
    <location>
        <begin position="280"/>
        <end position="294"/>
    </location>
    <ligand>
        <name>NAD(+)</name>
        <dbReference type="ChEBI" id="CHEBI:57540"/>
    </ligand>
</feature>
<feature type="binding site" evidence="1">
    <location>
        <position position="377"/>
    </location>
    <ligand>
        <name>FAD</name>
        <dbReference type="ChEBI" id="CHEBI:57692"/>
    </ligand>
</feature>
<keyword id="KW-0963">Cytoplasm</keyword>
<keyword id="KW-0274">FAD</keyword>
<keyword id="KW-0285">Flavoprotein</keyword>
<keyword id="KW-0520">NAD</keyword>
<keyword id="KW-0819">tRNA processing</keyword>
<dbReference type="EMBL" id="CP001080">
    <property type="protein sequence ID" value="ACD67196.1"/>
    <property type="molecule type" value="Genomic_DNA"/>
</dbReference>
<dbReference type="RefSeq" id="WP_012460252.1">
    <property type="nucleotide sequence ID" value="NC_010730.1"/>
</dbReference>
<dbReference type="SMR" id="B2V6C3"/>
<dbReference type="STRING" id="436114.SYO3AOP1_1598"/>
<dbReference type="KEGG" id="sul:SYO3AOP1_1598"/>
<dbReference type="eggNOG" id="COG0445">
    <property type="taxonomic scope" value="Bacteria"/>
</dbReference>
<dbReference type="HOGENOM" id="CLU_007831_2_2_0"/>
<dbReference type="GO" id="GO:0005829">
    <property type="term" value="C:cytosol"/>
    <property type="evidence" value="ECO:0007669"/>
    <property type="project" value="TreeGrafter"/>
</dbReference>
<dbReference type="GO" id="GO:0050660">
    <property type="term" value="F:flavin adenine dinucleotide binding"/>
    <property type="evidence" value="ECO:0007669"/>
    <property type="project" value="UniProtKB-UniRule"/>
</dbReference>
<dbReference type="GO" id="GO:0030488">
    <property type="term" value="P:tRNA methylation"/>
    <property type="evidence" value="ECO:0007669"/>
    <property type="project" value="TreeGrafter"/>
</dbReference>
<dbReference type="GO" id="GO:0002098">
    <property type="term" value="P:tRNA wobble uridine modification"/>
    <property type="evidence" value="ECO:0007669"/>
    <property type="project" value="InterPro"/>
</dbReference>
<dbReference type="FunFam" id="1.10.150.570:FF:000001">
    <property type="entry name" value="tRNA uridine 5-carboxymethylaminomethyl modification enzyme MnmG"/>
    <property type="match status" value="1"/>
</dbReference>
<dbReference type="FunFam" id="3.50.50.60:FF:000002">
    <property type="entry name" value="tRNA uridine 5-carboxymethylaminomethyl modification enzyme MnmG"/>
    <property type="match status" value="1"/>
</dbReference>
<dbReference type="Gene3D" id="3.50.50.60">
    <property type="entry name" value="FAD/NAD(P)-binding domain"/>
    <property type="match status" value="2"/>
</dbReference>
<dbReference type="Gene3D" id="1.10.150.570">
    <property type="entry name" value="GidA associated domain, C-terminal subdomain"/>
    <property type="match status" value="1"/>
</dbReference>
<dbReference type="Gene3D" id="1.10.10.1800">
    <property type="entry name" value="tRNA uridine 5-carboxymethylaminomethyl modification enzyme MnmG/GidA"/>
    <property type="match status" value="1"/>
</dbReference>
<dbReference type="HAMAP" id="MF_00129">
    <property type="entry name" value="MnmG_GidA"/>
    <property type="match status" value="1"/>
</dbReference>
<dbReference type="InterPro" id="IPR036188">
    <property type="entry name" value="FAD/NAD-bd_sf"/>
</dbReference>
<dbReference type="InterPro" id="IPR049312">
    <property type="entry name" value="GIDA_C_N"/>
</dbReference>
<dbReference type="InterPro" id="IPR004416">
    <property type="entry name" value="MnmG"/>
</dbReference>
<dbReference type="InterPro" id="IPR002218">
    <property type="entry name" value="MnmG-rel"/>
</dbReference>
<dbReference type="InterPro" id="IPR020595">
    <property type="entry name" value="MnmG-rel_CS"/>
</dbReference>
<dbReference type="InterPro" id="IPR026904">
    <property type="entry name" value="MnmG_C"/>
</dbReference>
<dbReference type="InterPro" id="IPR047001">
    <property type="entry name" value="MnmG_C_subdom"/>
</dbReference>
<dbReference type="InterPro" id="IPR044920">
    <property type="entry name" value="MnmG_C_subdom_sf"/>
</dbReference>
<dbReference type="InterPro" id="IPR040131">
    <property type="entry name" value="MnmG_N"/>
</dbReference>
<dbReference type="NCBIfam" id="TIGR00136">
    <property type="entry name" value="mnmG_gidA"/>
    <property type="match status" value="1"/>
</dbReference>
<dbReference type="PANTHER" id="PTHR11806">
    <property type="entry name" value="GLUCOSE INHIBITED DIVISION PROTEIN A"/>
    <property type="match status" value="1"/>
</dbReference>
<dbReference type="PANTHER" id="PTHR11806:SF0">
    <property type="entry name" value="PROTEIN MTO1 HOMOLOG, MITOCHONDRIAL"/>
    <property type="match status" value="1"/>
</dbReference>
<dbReference type="Pfam" id="PF01134">
    <property type="entry name" value="GIDA"/>
    <property type="match status" value="1"/>
</dbReference>
<dbReference type="Pfam" id="PF21680">
    <property type="entry name" value="GIDA_C_1st"/>
    <property type="match status" value="1"/>
</dbReference>
<dbReference type="Pfam" id="PF13932">
    <property type="entry name" value="SAM_GIDA_C"/>
    <property type="match status" value="1"/>
</dbReference>
<dbReference type="PRINTS" id="PR00411">
    <property type="entry name" value="PNDRDTASEI"/>
</dbReference>
<dbReference type="SMART" id="SM01228">
    <property type="entry name" value="GIDA_assoc_3"/>
    <property type="match status" value="1"/>
</dbReference>
<dbReference type="SUPFAM" id="SSF51905">
    <property type="entry name" value="FAD/NAD(P)-binding domain"/>
    <property type="match status" value="1"/>
</dbReference>
<dbReference type="PROSITE" id="PS01280">
    <property type="entry name" value="GIDA_1"/>
    <property type="match status" value="1"/>
</dbReference>
<dbReference type="PROSITE" id="PS01281">
    <property type="entry name" value="GIDA_2"/>
    <property type="match status" value="1"/>
</dbReference>
<sequence>MVYDIEYDVVVIGGGHAGIEAALASAKLGTKTALITIDKEKIGLMPCNPSIGGIAKGIVVREVDALGGEMAKAIDQTGIQFKVLNTRKGPAVRSPRAQADKEEYRKYMVNKTNNTENLTVIEDEVIDIVLKENKNEVDGVITDKGLKIKTKAVVVTTGTFLNGLIHIGDKRFPAGRMEEKPSTKLPEFYKRAGFELFRFKTGTPARLDKNTINFSILEEAPGDNPPPKFSFWTEPKGSYWFKEKDQIPCYITYTTPETHRIIKENLHRTALYGGAITGIGPRYCPSVEDKIVKFEGKDRHTVWLEPETRDGISIYPNGLSTSLSEEIQWQMYRSIPGLENVVLLKPAYAIEYDIVMPTELYPTLETKRIRGLYHAGNFNGTTGYEEAAGQGIVAGINAALRALGKDEPFIIRRDEAYIGVMIDDLTTKGVIEPYRLFTSRSEYRLHLRQDNAILRLYQKAYNIGMLNEEEYKFVKETEEEIKNWINIYKETFIKDGDKKVSIFTYLQKPEVDIQKLKEMGIAVPESDYIQEEIEINVKYDGYLEREEKLNEKMKYLEGIKIPEDIDYSQVAGLRKEIVQKLTKFKPMTLGQASRLEGITPAAITALLVHIEKMREKRKTG</sequence>
<organism>
    <name type="scientific">Sulfurihydrogenibium sp. (strain YO3AOP1)</name>
    <dbReference type="NCBI Taxonomy" id="436114"/>
    <lineage>
        <taxon>Bacteria</taxon>
        <taxon>Pseudomonadati</taxon>
        <taxon>Aquificota</taxon>
        <taxon>Aquificia</taxon>
        <taxon>Aquificales</taxon>
        <taxon>Hydrogenothermaceae</taxon>
        <taxon>Sulfurihydrogenibium</taxon>
    </lineage>
</organism>
<proteinExistence type="inferred from homology"/>
<comment type="function">
    <text evidence="1">NAD-binding protein involved in the addition of a carboxymethylaminomethyl (cmnm) group at the wobble position (U34) of certain tRNAs, forming tRNA-cmnm(5)s(2)U34.</text>
</comment>
<comment type="cofactor">
    <cofactor evidence="1">
        <name>FAD</name>
        <dbReference type="ChEBI" id="CHEBI:57692"/>
    </cofactor>
</comment>
<comment type="subunit">
    <text evidence="1">Homodimer. Heterotetramer of two MnmE and two MnmG subunits.</text>
</comment>
<comment type="subcellular location">
    <subcellularLocation>
        <location evidence="1">Cytoplasm</location>
    </subcellularLocation>
</comment>
<comment type="similarity">
    <text evidence="1">Belongs to the MnmG family.</text>
</comment>
<reference key="1">
    <citation type="journal article" date="2009" name="J. Bacteriol.">
        <title>Complete and draft genome sequences of six members of the Aquificales.</title>
        <authorList>
            <person name="Reysenbach A.-L."/>
            <person name="Hamamura N."/>
            <person name="Podar M."/>
            <person name="Griffiths E."/>
            <person name="Ferreira S."/>
            <person name="Hochstein R."/>
            <person name="Heidelberg J."/>
            <person name="Johnson J."/>
            <person name="Mead D."/>
            <person name="Pohorille A."/>
            <person name="Sarmiento M."/>
            <person name="Schweighofer K."/>
            <person name="Seshadri R."/>
            <person name="Voytek M.A."/>
        </authorList>
    </citation>
    <scope>NUCLEOTIDE SEQUENCE [LARGE SCALE GENOMIC DNA]</scope>
    <source>
        <strain>YO3AOP1</strain>
    </source>
</reference>
<gene>
    <name evidence="1" type="primary">mnmG</name>
    <name evidence="1" type="synonym">gidA</name>
    <name type="ordered locus">SYO3AOP1_1598</name>
</gene>
<evidence type="ECO:0000255" key="1">
    <source>
        <dbReference type="HAMAP-Rule" id="MF_00129"/>
    </source>
</evidence>
<protein>
    <recommendedName>
        <fullName evidence="1">tRNA uridine 5-carboxymethylaminomethyl modification enzyme MnmG</fullName>
    </recommendedName>
    <alternativeName>
        <fullName evidence="1">Glucose-inhibited division protein A</fullName>
    </alternativeName>
</protein>